<protein>
    <recommendedName>
        <fullName evidence="1">dCTP deaminase</fullName>
        <ecNumber evidence="1">3.5.4.13</ecNumber>
    </recommendedName>
    <alternativeName>
        <fullName evidence="1">Deoxycytidine triphosphate deaminase</fullName>
    </alternativeName>
</protein>
<sequence length="189" mass="21241">MSIKSDRWIKRMAEQHAMIAPFEPGQIKHDAAGQRIVSFGTSSYGYDVRCSREFKIFTNINSTIVDPKRFDPGSFVDVESDVCIIPPNSFALARTVEYFRIPRDTLVVCLGKSTYARCGIIVNVTPLEPEWEGHVTLEFSNTTPLPARIYANEGVAQMLFFQSDEVCETSYKDRGGKYQGQTGVTLPRT</sequence>
<comment type="function">
    <text evidence="1">Catalyzes the deamination of dCTP to dUTP.</text>
</comment>
<comment type="catalytic activity">
    <reaction evidence="1">
        <text>dCTP + H2O + H(+) = dUTP + NH4(+)</text>
        <dbReference type="Rhea" id="RHEA:22680"/>
        <dbReference type="ChEBI" id="CHEBI:15377"/>
        <dbReference type="ChEBI" id="CHEBI:15378"/>
        <dbReference type="ChEBI" id="CHEBI:28938"/>
        <dbReference type="ChEBI" id="CHEBI:61481"/>
        <dbReference type="ChEBI" id="CHEBI:61555"/>
        <dbReference type="EC" id="3.5.4.13"/>
    </reaction>
</comment>
<comment type="pathway">
    <text evidence="1">Pyrimidine metabolism; dUMP biosynthesis; dUMP from dCTP (dUTP route): step 1/2.</text>
</comment>
<comment type="subunit">
    <text evidence="1">Homotrimer.</text>
</comment>
<comment type="similarity">
    <text evidence="1">Belongs to the dCTP deaminase family.</text>
</comment>
<name>DCD_XANOR</name>
<feature type="chain" id="PRO_1000009832" description="dCTP deaminase">
    <location>
        <begin position="1"/>
        <end position="189"/>
    </location>
</feature>
<feature type="active site" description="Proton donor/acceptor" evidence="1">
    <location>
        <position position="138"/>
    </location>
</feature>
<feature type="binding site" evidence="1">
    <location>
        <begin position="112"/>
        <end position="117"/>
    </location>
    <ligand>
        <name>dCTP</name>
        <dbReference type="ChEBI" id="CHEBI:61481"/>
    </ligand>
</feature>
<feature type="binding site" evidence="1">
    <location>
        <begin position="136"/>
        <end position="138"/>
    </location>
    <ligand>
        <name>dCTP</name>
        <dbReference type="ChEBI" id="CHEBI:61481"/>
    </ligand>
</feature>
<feature type="binding site" evidence="1">
    <location>
        <position position="157"/>
    </location>
    <ligand>
        <name>dCTP</name>
        <dbReference type="ChEBI" id="CHEBI:61481"/>
    </ligand>
</feature>
<feature type="binding site" evidence="1">
    <location>
        <position position="171"/>
    </location>
    <ligand>
        <name>dCTP</name>
        <dbReference type="ChEBI" id="CHEBI:61481"/>
    </ligand>
</feature>
<feature type="binding site" evidence="1">
    <location>
        <position position="181"/>
    </location>
    <ligand>
        <name>dCTP</name>
        <dbReference type="ChEBI" id="CHEBI:61481"/>
    </ligand>
</feature>
<reference key="1">
    <citation type="journal article" date="2005" name="Nucleic Acids Res.">
        <title>The genome sequence of Xanthomonas oryzae pathovar oryzae KACC10331, the bacterial blight pathogen of rice.</title>
        <authorList>
            <person name="Lee B.-M."/>
            <person name="Park Y.-J."/>
            <person name="Park D.-S."/>
            <person name="Kang H.-W."/>
            <person name="Kim J.-G."/>
            <person name="Song E.-S."/>
            <person name="Park I.-C."/>
            <person name="Yoon U.-H."/>
            <person name="Hahn J.-H."/>
            <person name="Koo B.-S."/>
            <person name="Lee G.-B."/>
            <person name="Kim H."/>
            <person name="Park H.-S."/>
            <person name="Yoon K.-O."/>
            <person name="Kim J.-H."/>
            <person name="Jung C.-H."/>
            <person name="Koh N.-H."/>
            <person name="Seo J.-S."/>
            <person name="Go S.-J."/>
        </authorList>
    </citation>
    <scope>NUCLEOTIDE SEQUENCE [LARGE SCALE GENOMIC DNA]</scope>
    <source>
        <strain>KACC10331 / KXO85</strain>
    </source>
</reference>
<accession>Q5GXN9</accession>
<proteinExistence type="inferred from homology"/>
<dbReference type="EC" id="3.5.4.13" evidence="1"/>
<dbReference type="EMBL" id="AE013598">
    <property type="protein sequence ID" value="AAW76532.1"/>
    <property type="molecule type" value="Genomic_DNA"/>
</dbReference>
<dbReference type="SMR" id="Q5GXN9"/>
<dbReference type="STRING" id="291331.XOO3278"/>
<dbReference type="KEGG" id="xoo:XOO3278"/>
<dbReference type="HOGENOM" id="CLU_087476_4_0_6"/>
<dbReference type="UniPathway" id="UPA00610">
    <property type="reaction ID" value="UER00665"/>
</dbReference>
<dbReference type="Proteomes" id="UP000006735">
    <property type="component" value="Chromosome"/>
</dbReference>
<dbReference type="GO" id="GO:0008829">
    <property type="term" value="F:dCTP deaminase activity"/>
    <property type="evidence" value="ECO:0007669"/>
    <property type="project" value="UniProtKB-UniRule"/>
</dbReference>
<dbReference type="GO" id="GO:0000166">
    <property type="term" value="F:nucleotide binding"/>
    <property type="evidence" value="ECO:0007669"/>
    <property type="project" value="UniProtKB-KW"/>
</dbReference>
<dbReference type="GO" id="GO:0006226">
    <property type="term" value="P:dUMP biosynthetic process"/>
    <property type="evidence" value="ECO:0007669"/>
    <property type="project" value="UniProtKB-UniPathway"/>
</dbReference>
<dbReference type="GO" id="GO:0006229">
    <property type="term" value="P:dUTP biosynthetic process"/>
    <property type="evidence" value="ECO:0007669"/>
    <property type="project" value="UniProtKB-UniRule"/>
</dbReference>
<dbReference type="GO" id="GO:0015949">
    <property type="term" value="P:nucleobase-containing small molecule interconversion"/>
    <property type="evidence" value="ECO:0007669"/>
    <property type="project" value="TreeGrafter"/>
</dbReference>
<dbReference type="CDD" id="cd07557">
    <property type="entry name" value="trimeric_dUTPase"/>
    <property type="match status" value="1"/>
</dbReference>
<dbReference type="FunFam" id="2.70.40.10:FF:000001">
    <property type="entry name" value="dCTP deaminase"/>
    <property type="match status" value="1"/>
</dbReference>
<dbReference type="Gene3D" id="2.70.40.10">
    <property type="match status" value="1"/>
</dbReference>
<dbReference type="HAMAP" id="MF_00146">
    <property type="entry name" value="dCTP_deaminase"/>
    <property type="match status" value="1"/>
</dbReference>
<dbReference type="InterPro" id="IPR011962">
    <property type="entry name" value="dCTP_deaminase"/>
</dbReference>
<dbReference type="InterPro" id="IPR036157">
    <property type="entry name" value="dUTPase-like_sf"/>
</dbReference>
<dbReference type="InterPro" id="IPR033704">
    <property type="entry name" value="dUTPase_trimeric"/>
</dbReference>
<dbReference type="NCBIfam" id="TIGR02274">
    <property type="entry name" value="dCTP_deam"/>
    <property type="match status" value="1"/>
</dbReference>
<dbReference type="PANTHER" id="PTHR42680">
    <property type="entry name" value="DCTP DEAMINASE"/>
    <property type="match status" value="1"/>
</dbReference>
<dbReference type="PANTHER" id="PTHR42680:SF3">
    <property type="entry name" value="DCTP DEAMINASE"/>
    <property type="match status" value="1"/>
</dbReference>
<dbReference type="Pfam" id="PF22769">
    <property type="entry name" value="DCD"/>
    <property type="match status" value="1"/>
</dbReference>
<dbReference type="SUPFAM" id="SSF51283">
    <property type="entry name" value="dUTPase-like"/>
    <property type="match status" value="1"/>
</dbReference>
<gene>
    <name evidence="1" type="primary">dcd</name>
    <name type="ordered locus">XOO3278</name>
</gene>
<keyword id="KW-0378">Hydrolase</keyword>
<keyword id="KW-0546">Nucleotide metabolism</keyword>
<keyword id="KW-0547">Nucleotide-binding</keyword>
<keyword id="KW-1185">Reference proteome</keyword>
<organism>
    <name type="scientific">Xanthomonas oryzae pv. oryzae (strain KACC10331 / KXO85)</name>
    <dbReference type="NCBI Taxonomy" id="291331"/>
    <lineage>
        <taxon>Bacteria</taxon>
        <taxon>Pseudomonadati</taxon>
        <taxon>Pseudomonadota</taxon>
        <taxon>Gammaproteobacteria</taxon>
        <taxon>Lysobacterales</taxon>
        <taxon>Lysobacteraceae</taxon>
        <taxon>Xanthomonas</taxon>
    </lineage>
</organism>
<evidence type="ECO:0000255" key="1">
    <source>
        <dbReference type="HAMAP-Rule" id="MF_00146"/>
    </source>
</evidence>